<feature type="chain" id="PRO_0000240750" description="Argininosuccinate lyase">
    <location>
        <begin position="1"/>
        <end position="463"/>
    </location>
</feature>
<evidence type="ECO:0000255" key="1">
    <source>
        <dbReference type="HAMAP-Rule" id="MF_00006"/>
    </source>
</evidence>
<sequence length="463" mass="52533">MEKALSKTWSERFDKGLNPFIEKFNASIEFDICLLEEDLDGSIAHARMLGIQGIITKEEALRLENGLQQIRKEASDGLFHPVISDEDVHFAVEKKLIDLIGPVGKKLHTGRSRNDQVGTDLRLWLRKRIDEIDMDLVRLQKSLFLLAEENLYTLIPGYTHLQRAQPLSLAHHLLAYIEMAQRDRNRLKDVRKRVNISPLGAAALAGTSISISRKITSSELHFQGIYSNSLDAVSDRDFVVEFLGASSLIMAHLSRLSEEVILWASEEFAFIQLTDRCATGSSLMPQKKNPDVPELVRGKSGRVFGHLQAMLTMIKGLPLAYNKDFQEDKEAIFDSVKTVKNSLIAISILFEEGLIFRKERLNQAVSSDFSNATDVADYLVAKDIPFREAYQLVGRIVKTSLEEGILLKDIPLERWKTFHKFFEKDIYEKLLPSSVVESRLSAGGTGFERVQEQLLSWREKLFN</sequence>
<dbReference type="EC" id="4.3.2.1" evidence="1"/>
<dbReference type="EMBL" id="CP000095">
    <property type="protein sequence ID" value="AAZ58828.1"/>
    <property type="molecule type" value="Genomic_DNA"/>
</dbReference>
<dbReference type="RefSeq" id="WP_011293972.1">
    <property type="nucleotide sequence ID" value="NC_007335.2"/>
</dbReference>
<dbReference type="SMR" id="Q46I50"/>
<dbReference type="STRING" id="59920.PMN2A_1339"/>
<dbReference type="KEGG" id="pmn:PMN2A_1339"/>
<dbReference type="HOGENOM" id="CLU_027272_2_3_3"/>
<dbReference type="OrthoDB" id="9769623at2"/>
<dbReference type="PhylomeDB" id="Q46I50"/>
<dbReference type="UniPathway" id="UPA00068">
    <property type="reaction ID" value="UER00114"/>
</dbReference>
<dbReference type="Proteomes" id="UP000002535">
    <property type="component" value="Chromosome"/>
</dbReference>
<dbReference type="GO" id="GO:0005829">
    <property type="term" value="C:cytosol"/>
    <property type="evidence" value="ECO:0007669"/>
    <property type="project" value="TreeGrafter"/>
</dbReference>
<dbReference type="GO" id="GO:0004056">
    <property type="term" value="F:argininosuccinate lyase activity"/>
    <property type="evidence" value="ECO:0007669"/>
    <property type="project" value="UniProtKB-UniRule"/>
</dbReference>
<dbReference type="GO" id="GO:0042450">
    <property type="term" value="P:arginine biosynthetic process via ornithine"/>
    <property type="evidence" value="ECO:0007669"/>
    <property type="project" value="InterPro"/>
</dbReference>
<dbReference type="GO" id="GO:0006526">
    <property type="term" value="P:L-arginine biosynthetic process"/>
    <property type="evidence" value="ECO:0007669"/>
    <property type="project" value="UniProtKB-UniRule"/>
</dbReference>
<dbReference type="CDD" id="cd01359">
    <property type="entry name" value="Argininosuccinate_lyase"/>
    <property type="match status" value="1"/>
</dbReference>
<dbReference type="FunFam" id="1.10.275.10:FF:000002">
    <property type="entry name" value="Argininosuccinate lyase"/>
    <property type="match status" value="1"/>
</dbReference>
<dbReference type="FunFam" id="1.10.40.30:FF:000001">
    <property type="entry name" value="Argininosuccinate lyase"/>
    <property type="match status" value="1"/>
</dbReference>
<dbReference type="FunFam" id="1.20.200.10:FF:000015">
    <property type="entry name" value="argininosuccinate lyase isoform X2"/>
    <property type="match status" value="1"/>
</dbReference>
<dbReference type="Gene3D" id="1.10.40.30">
    <property type="entry name" value="Fumarase/aspartase (C-terminal domain)"/>
    <property type="match status" value="1"/>
</dbReference>
<dbReference type="Gene3D" id="1.20.200.10">
    <property type="entry name" value="Fumarase/aspartase (Central domain)"/>
    <property type="match status" value="1"/>
</dbReference>
<dbReference type="Gene3D" id="1.10.275.10">
    <property type="entry name" value="Fumarase/aspartase (N-terminal domain)"/>
    <property type="match status" value="1"/>
</dbReference>
<dbReference type="HAMAP" id="MF_00006">
    <property type="entry name" value="Arg_succ_lyase"/>
    <property type="match status" value="1"/>
</dbReference>
<dbReference type="InterPro" id="IPR029419">
    <property type="entry name" value="Arg_succ_lyase_C"/>
</dbReference>
<dbReference type="InterPro" id="IPR009049">
    <property type="entry name" value="Argininosuccinate_lyase"/>
</dbReference>
<dbReference type="InterPro" id="IPR024083">
    <property type="entry name" value="Fumarase/histidase_N"/>
</dbReference>
<dbReference type="InterPro" id="IPR020557">
    <property type="entry name" value="Fumarate_lyase_CS"/>
</dbReference>
<dbReference type="InterPro" id="IPR000362">
    <property type="entry name" value="Fumarate_lyase_fam"/>
</dbReference>
<dbReference type="InterPro" id="IPR022761">
    <property type="entry name" value="Fumarate_lyase_N"/>
</dbReference>
<dbReference type="InterPro" id="IPR008948">
    <property type="entry name" value="L-Aspartase-like"/>
</dbReference>
<dbReference type="NCBIfam" id="TIGR00838">
    <property type="entry name" value="argH"/>
    <property type="match status" value="1"/>
</dbReference>
<dbReference type="PANTHER" id="PTHR43814">
    <property type="entry name" value="ARGININOSUCCINATE LYASE"/>
    <property type="match status" value="1"/>
</dbReference>
<dbReference type="PANTHER" id="PTHR43814:SF1">
    <property type="entry name" value="ARGININOSUCCINATE LYASE"/>
    <property type="match status" value="1"/>
</dbReference>
<dbReference type="Pfam" id="PF14698">
    <property type="entry name" value="ASL_C2"/>
    <property type="match status" value="1"/>
</dbReference>
<dbReference type="Pfam" id="PF00206">
    <property type="entry name" value="Lyase_1"/>
    <property type="match status" value="1"/>
</dbReference>
<dbReference type="PRINTS" id="PR00145">
    <property type="entry name" value="ARGSUCLYASE"/>
</dbReference>
<dbReference type="PRINTS" id="PR00149">
    <property type="entry name" value="FUMRATELYASE"/>
</dbReference>
<dbReference type="SUPFAM" id="SSF48557">
    <property type="entry name" value="L-aspartase-like"/>
    <property type="match status" value="1"/>
</dbReference>
<dbReference type="PROSITE" id="PS00163">
    <property type="entry name" value="FUMARATE_LYASES"/>
    <property type="match status" value="1"/>
</dbReference>
<comment type="catalytic activity">
    <reaction evidence="1">
        <text>2-(N(omega)-L-arginino)succinate = fumarate + L-arginine</text>
        <dbReference type="Rhea" id="RHEA:24020"/>
        <dbReference type="ChEBI" id="CHEBI:29806"/>
        <dbReference type="ChEBI" id="CHEBI:32682"/>
        <dbReference type="ChEBI" id="CHEBI:57472"/>
        <dbReference type="EC" id="4.3.2.1"/>
    </reaction>
</comment>
<comment type="pathway">
    <text evidence="1">Amino-acid biosynthesis; L-arginine biosynthesis; L-arginine from L-ornithine and carbamoyl phosphate: step 3/3.</text>
</comment>
<comment type="subcellular location">
    <subcellularLocation>
        <location evidence="1">Cytoplasm</location>
    </subcellularLocation>
</comment>
<comment type="similarity">
    <text evidence="1">Belongs to the lyase 1 family. Argininosuccinate lyase subfamily.</text>
</comment>
<keyword id="KW-0028">Amino-acid biosynthesis</keyword>
<keyword id="KW-0055">Arginine biosynthesis</keyword>
<keyword id="KW-0963">Cytoplasm</keyword>
<keyword id="KW-0456">Lyase</keyword>
<keyword id="KW-1185">Reference proteome</keyword>
<reference key="1">
    <citation type="journal article" date="2007" name="PLoS Genet.">
        <title>Patterns and implications of gene gain and loss in the evolution of Prochlorococcus.</title>
        <authorList>
            <person name="Kettler G.C."/>
            <person name="Martiny A.C."/>
            <person name="Huang K."/>
            <person name="Zucker J."/>
            <person name="Coleman M.L."/>
            <person name="Rodrigue S."/>
            <person name="Chen F."/>
            <person name="Lapidus A."/>
            <person name="Ferriera S."/>
            <person name="Johnson J."/>
            <person name="Steglich C."/>
            <person name="Church G.M."/>
            <person name="Richardson P."/>
            <person name="Chisholm S.W."/>
        </authorList>
    </citation>
    <scope>NUCLEOTIDE SEQUENCE [LARGE SCALE GENOMIC DNA]</scope>
    <source>
        <strain>NATL2A</strain>
    </source>
</reference>
<proteinExistence type="inferred from homology"/>
<organism>
    <name type="scientific">Prochlorococcus marinus (strain NATL2A)</name>
    <dbReference type="NCBI Taxonomy" id="59920"/>
    <lineage>
        <taxon>Bacteria</taxon>
        <taxon>Bacillati</taxon>
        <taxon>Cyanobacteriota</taxon>
        <taxon>Cyanophyceae</taxon>
        <taxon>Synechococcales</taxon>
        <taxon>Prochlorococcaceae</taxon>
        <taxon>Prochlorococcus</taxon>
    </lineage>
</organism>
<accession>Q46I50</accession>
<gene>
    <name evidence="1" type="primary">argH</name>
    <name type="ordered locus">PMN2A_1339</name>
</gene>
<protein>
    <recommendedName>
        <fullName evidence="1">Argininosuccinate lyase</fullName>
        <shortName evidence="1">ASAL</shortName>
        <ecNumber evidence="1">4.3.2.1</ecNumber>
    </recommendedName>
    <alternativeName>
        <fullName evidence="1">Arginosuccinase</fullName>
    </alternativeName>
</protein>
<name>ARLY_PROMT</name>